<protein>
    <recommendedName>
        <fullName evidence="1">Phospho-N-acetylmuramoyl-pentapeptide-transferase</fullName>
        <ecNumber evidence="1">2.7.8.13</ecNumber>
    </recommendedName>
    <alternativeName>
        <fullName evidence="1">UDP-MurNAc-pentapeptide phosphotransferase</fullName>
    </alternativeName>
</protein>
<dbReference type="EC" id="2.7.8.13" evidence="1"/>
<dbReference type="EMBL" id="CP000783">
    <property type="protein sequence ID" value="ABU78473.1"/>
    <property type="molecule type" value="Genomic_DNA"/>
</dbReference>
<dbReference type="RefSeq" id="WP_004386403.1">
    <property type="nucleotide sequence ID" value="NC_009778.1"/>
</dbReference>
<dbReference type="SMR" id="A7MIF2"/>
<dbReference type="GeneID" id="56731937"/>
<dbReference type="KEGG" id="esa:ESA_03251"/>
<dbReference type="HOGENOM" id="CLU_023982_0_0_6"/>
<dbReference type="UniPathway" id="UPA00219"/>
<dbReference type="Proteomes" id="UP000000260">
    <property type="component" value="Chromosome"/>
</dbReference>
<dbReference type="GO" id="GO:0005886">
    <property type="term" value="C:plasma membrane"/>
    <property type="evidence" value="ECO:0007669"/>
    <property type="project" value="UniProtKB-SubCell"/>
</dbReference>
<dbReference type="GO" id="GO:0046872">
    <property type="term" value="F:metal ion binding"/>
    <property type="evidence" value="ECO:0007669"/>
    <property type="project" value="UniProtKB-KW"/>
</dbReference>
<dbReference type="GO" id="GO:0008963">
    <property type="term" value="F:phospho-N-acetylmuramoyl-pentapeptide-transferase activity"/>
    <property type="evidence" value="ECO:0007669"/>
    <property type="project" value="UniProtKB-UniRule"/>
</dbReference>
<dbReference type="GO" id="GO:0051992">
    <property type="term" value="F:UDP-N-acetylmuramoyl-L-alanyl-D-glutamyl-meso-2,6-diaminopimelyl-D-alanyl-D-alanine:undecaprenyl-phosphate transferase activity"/>
    <property type="evidence" value="ECO:0007669"/>
    <property type="project" value="RHEA"/>
</dbReference>
<dbReference type="GO" id="GO:0051301">
    <property type="term" value="P:cell division"/>
    <property type="evidence" value="ECO:0007669"/>
    <property type="project" value="UniProtKB-KW"/>
</dbReference>
<dbReference type="GO" id="GO:0071555">
    <property type="term" value="P:cell wall organization"/>
    <property type="evidence" value="ECO:0007669"/>
    <property type="project" value="UniProtKB-KW"/>
</dbReference>
<dbReference type="GO" id="GO:0009252">
    <property type="term" value="P:peptidoglycan biosynthetic process"/>
    <property type="evidence" value="ECO:0007669"/>
    <property type="project" value="UniProtKB-UniRule"/>
</dbReference>
<dbReference type="GO" id="GO:0008360">
    <property type="term" value="P:regulation of cell shape"/>
    <property type="evidence" value="ECO:0007669"/>
    <property type="project" value="UniProtKB-KW"/>
</dbReference>
<dbReference type="CDD" id="cd06852">
    <property type="entry name" value="GT_MraY"/>
    <property type="match status" value="1"/>
</dbReference>
<dbReference type="HAMAP" id="MF_00038">
    <property type="entry name" value="MraY"/>
    <property type="match status" value="1"/>
</dbReference>
<dbReference type="InterPro" id="IPR000715">
    <property type="entry name" value="Glycosyl_transferase_4"/>
</dbReference>
<dbReference type="InterPro" id="IPR003524">
    <property type="entry name" value="PNAcMuramoyl-5peptid_Trfase"/>
</dbReference>
<dbReference type="InterPro" id="IPR018480">
    <property type="entry name" value="PNAcMuramoyl-5peptid_Trfase_CS"/>
</dbReference>
<dbReference type="NCBIfam" id="TIGR00445">
    <property type="entry name" value="mraY"/>
    <property type="match status" value="1"/>
</dbReference>
<dbReference type="PANTHER" id="PTHR22926">
    <property type="entry name" value="PHOSPHO-N-ACETYLMURAMOYL-PENTAPEPTIDE-TRANSFERASE"/>
    <property type="match status" value="1"/>
</dbReference>
<dbReference type="PANTHER" id="PTHR22926:SF5">
    <property type="entry name" value="PHOSPHO-N-ACETYLMURAMOYL-PENTAPEPTIDE-TRANSFERASE HOMOLOG"/>
    <property type="match status" value="1"/>
</dbReference>
<dbReference type="Pfam" id="PF00953">
    <property type="entry name" value="Glycos_transf_4"/>
    <property type="match status" value="1"/>
</dbReference>
<dbReference type="Pfam" id="PF10555">
    <property type="entry name" value="MraY_sig1"/>
    <property type="match status" value="1"/>
</dbReference>
<dbReference type="PROSITE" id="PS01347">
    <property type="entry name" value="MRAY_1"/>
    <property type="match status" value="1"/>
</dbReference>
<dbReference type="PROSITE" id="PS01348">
    <property type="entry name" value="MRAY_2"/>
    <property type="match status" value="1"/>
</dbReference>
<evidence type="ECO:0000255" key="1">
    <source>
        <dbReference type="HAMAP-Rule" id="MF_00038"/>
    </source>
</evidence>
<gene>
    <name evidence="1" type="primary">mraY</name>
    <name type="ordered locus">ESA_03251</name>
</gene>
<name>MRAY_CROS8</name>
<comment type="function">
    <text evidence="1">Catalyzes the initial step of the lipid cycle reactions in the biosynthesis of the cell wall peptidoglycan: transfers peptidoglycan precursor phospho-MurNAc-pentapeptide from UDP-MurNAc-pentapeptide onto the lipid carrier undecaprenyl phosphate, yielding undecaprenyl-pyrophosphoryl-MurNAc-pentapeptide, known as lipid I.</text>
</comment>
<comment type="catalytic activity">
    <reaction evidence="1">
        <text>UDP-N-acetyl-alpha-D-muramoyl-L-alanyl-gamma-D-glutamyl-meso-2,6-diaminopimeloyl-D-alanyl-D-alanine + di-trans,octa-cis-undecaprenyl phosphate = di-trans,octa-cis-undecaprenyl diphospho-N-acetyl-alpha-D-muramoyl-L-alanyl-D-glutamyl-meso-2,6-diaminopimeloyl-D-alanyl-D-alanine + UMP</text>
        <dbReference type="Rhea" id="RHEA:28386"/>
        <dbReference type="ChEBI" id="CHEBI:57865"/>
        <dbReference type="ChEBI" id="CHEBI:60392"/>
        <dbReference type="ChEBI" id="CHEBI:61386"/>
        <dbReference type="ChEBI" id="CHEBI:61387"/>
        <dbReference type="EC" id="2.7.8.13"/>
    </reaction>
</comment>
<comment type="cofactor">
    <cofactor evidence="1">
        <name>Mg(2+)</name>
        <dbReference type="ChEBI" id="CHEBI:18420"/>
    </cofactor>
</comment>
<comment type="pathway">
    <text evidence="1">Cell wall biogenesis; peptidoglycan biosynthesis.</text>
</comment>
<comment type="subcellular location">
    <subcellularLocation>
        <location evidence="1">Cell inner membrane</location>
        <topology evidence="1">Multi-pass membrane protein</topology>
    </subcellularLocation>
</comment>
<comment type="similarity">
    <text evidence="1">Belongs to the glycosyltransferase 4 family. MraY subfamily.</text>
</comment>
<feature type="chain" id="PRO_1000002971" description="Phospho-N-acetylmuramoyl-pentapeptide-transferase">
    <location>
        <begin position="1"/>
        <end position="360"/>
    </location>
</feature>
<feature type="transmembrane region" description="Helical" evidence="1">
    <location>
        <begin position="26"/>
        <end position="46"/>
    </location>
</feature>
<feature type="transmembrane region" description="Helical" evidence="1">
    <location>
        <begin position="72"/>
        <end position="92"/>
    </location>
</feature>
<feature type="transmembrane region" description="Helical" evidence="1">
    <location>
        <begin position="94"/>
        <end position="114"/>
    </location>
</feature>
<feature type="transmembrane region" description="Helical" evidence="1">
    <location>
        <begin position="132"/>
        <end position="152"/>
    </location>
</feature>
<feature type="transmembrane region" description="Helical" evidence="1">
    <location>
        <begin position="168"/>
        <end position="188"/>
    </location>
</feature>
<feature type="transmembrane region" description="Helical" evidence="1">
    <location>
        <begin position="199"/>
        <end position="219"/>
    </location>
</feature>
<feature type="transmembrane region" description="Helical" evidence="1">
    <location>
        <begin position="236"/>
        <end position="256"/>
    </location>
</feature>
<feature type="transmembrane region" description="Helical" evidence="1">
    <location>
        <begin position="263"/>
        <end position="283"/>
    </location>
</feature>
<feature type="transmembrane region" description="Helical" evidence="1">
    <location>
        <begin position="288"/>
        <end position="308"/>
    </location>
</feature>
<feature type="transmembrane region" description="Helical" evidence="1">
    <location>
        <begin position="338"/>
        <end position="358"/>
    </location>
</feature>
<reference key="1">
    <citation type="journal article" date="2010" name="PLoS ONE">
        <title>Genome sequence of Cronobacter sakazakii BAA-894 and comparative genomic hybridization analysis with other Cronobacter species.</title>
        <authorList>
            <person name="Kucerova E."/>
            <person name="Clifton S.W."/>
            <person name="Xia X.Q."/>
            <person name="Long F."/>
            <person name="Porwollik S."/>
            <person name="Fulton L."/>
            <person name="Fronick C."/>
            <person name="Minx P."/>
            <person name="Kyung K."/>
            <person name="Warren W."/>
            <person name="Fulton R."/>
            <person name="Feng D."/>
            <person name="Wollam A."/>
            <person name="Shah N."/>
            <person name="Bhonagiri V."/>
            <person name="Nash W.E."/>
            <person name="Hallsworth-Pepin K."/>
            <person name="Wilson R.K."/>
            <person name="McClelland M."/>
            <person name="Forsythe S.J."/>
        </authorList>
    </citation>
    <scope>NUCLEOTIDE SEQUENCE [LARGE SCALE GENOMIC DNA]</scope>
    <source>
        <strain>ATCC BAA-894</strain>
    </source>
</reference>
<proteinExistence type="inferred from homology"/>
<organism>
    <name type="scientific">Cronobacter sakazakii (strain ATCC BAA-894)</name>
    <name type="common">Enterobacter sakazakii</name>
    <dbReference type="NCBI Taxonomy" id="290339"/>
    <lineage>
        <taxon>Bacteria</taxon>
        <taxon>Pseudomonadati</taxon>
        <taxon>Pseudomonadota</taxon>
        <taxon>Gammaproteobacteria</taxon>
        <taxon>Enterobacterales</taxon>
        <taxon>Enterobacteriaceae</taxon>
        <taxon>Cronobacter</taxon>
    </lineage>
</organism>
<sequence length="360" mass="39834">MLVWLAEHLVKYYSGFNVFSYLTFRAIVSLLTALFISLWMGPRLIAHLQKLSFGQVVRNDGPESHFSKRGTPTMGGIMILTSIVVSVLLWAYPSNPYVWCVLFVLVGYGAVGFVDDYRKVVRKDTKGLIARWKYFWMSLIALTVAFALYITGKGTPATELVVPFFKDVMPQLGIFYVLLAYFVIVGTGNAVNLTDGLDGLAIMPTVLVAGGFALVAWATGNMNFASYLHIPYLRHAGELVIVCTAIVGAGLGFLWFNTYPAQVFMGDVGSLALGGALGIIAVLLRQEFLLVIMGGVFVVETLSVILQVGSFKLRGQRIFRMAPIHHHYELKGWPEPRVIVRFWVISLMLVLIGLATLKVR</sequence>
<accession>A7MIF2</accession>
<keyword id="KW-0131">Cell cycle</keyword>
<keyword id="KW-0132">Cell division</keyword>
<keyword id="KW-0997">Cell inner membrane</keyword>
<keyword id="KW-1003">Cell membrane</keyword>
<keyword id="KW-0133">Cell shape</keyword>
<keyword id="KW-0961">Cell wall biogenesis/degradation</keyword>
<keyword id="KW-0460">Magnesium</keyword>
<keyword id="KW-0472">Membrane</keyword>
<keyword id="KW-0479">Metal-binding</keyword>
<keyword id="KW-0573">Peptidoglycan synthesis</keyword>
<keyword id="KW-1185">Reference proteome</keyword>
<keyword id="KW-0808">Transferase</keyword>
<keyword id="KW-0812">Transmembrane</keyword>
<keyword id="KW-1133">Transmembrane helix</keyword>